<protein>
    <recommendedName>
        <fullName evidence="1">LexA repressor</fullName>
        <ecNumber evidence="1">3.4.21.88</ecNumber>
    </recommendedName>
</protein>
<organism>
    <name type="scientific">Lactobacillus delbrueckii subsp. bulgaricus (strain ATCC BAA-365 / Lb-18)</name>
    <dbReference type="NCBI Taxonomy" id="321956"/>
    <lineage>
        <taxon>Bacteria</taxon>
        <taxon>Bacillati</taxon>
        <taxon>Bacillota</taxon>
        <taxon>Bacilli</taxon>
        <taxon>Lactobacillales</taxon>
        <taxon>Lactobacillaceae</taxon>
        <taxon>Lactobacillus</taxon>
    </lineage>
</organism>
<reference key="1">
    <citation type="journal article" date="2006" name="Proc. Natl. Acad. Sci. U.S.A.">
        <title>Comparative genomics of the lactic acid bacteria.</title>
        <authorList>
            <person name="Makarova K.S."/>
            <person name="Slesarev A."/>
            <person name="Wolf Y.I."/>
            <person name="Sorokin A."/>
            <person name="Mirkin B."/>
            <person name="Koonin E.V."/>
            <person name="Pavlov A."/>
            <person name="Pavlova N."/>
            <person name="Karamychev V."/>
            <person name="Polouchine N."/>
            <person name="Shakhova V."/>
            <person name="Grigoriev I."/>
            <person name="Lou Y."/>
            <person name="Rohksar D."/>
            <person name="Lucas S."/>
            <person name="Huang K."/>
            <person name="Goodstein D.M."/>
            <person name="Hawkins T."/>
            <person name="Plengvidhya V."/>
            <person name="Welker D."/>
            <person name="Hughes J."/>
            <person name="Goh Y."/>
            <person name="Benson A."/>
            <person name="Baldwin K."/>
            <person name="Lee J.-H."/>
            <person name="Diaz-Muniz I."/>
            <person name="Dosti B."/>
            <person name="Smeianov V."/>
            <person name="Wechter W."/>
            <person name="Barabote R."/>
            <person name="Lorca G."/>
            <person name="Altermann E."/>
            <person name="Barrangou R."/>
            <person name="Ganesan B."/>
            <person name="Xie Y."/>
            <person name="Rawsthorne H."/>
            <person name="Tamir D."/>
            <person name="Parker C."/>
            <person name="Breidt F."/>
            <person name="Broadbent J.R."/>
            <person name="Hutkins R."/>
            <person name="O'Sullivan D."/>
            <person name="Steele J."/>
            <person name="Unlu G."/>
            <person name="Saier M.H. Jr."/>
            <person name="Klaenhammer T."/>
            <person name="Richardson P."/>
            <person name="Kozyavkin S."/>
            <person name="Weimer B.C."/>
            <person name="Mills D.A."/>
        </authorList>
    </citation>
    <scope>NUCLEOTIDE SEQUENCE [LARGE SCALE GENOMIC DNA]</scope>
    <source>
        <strain>ATCC BAA-365 / Lb-18</strain>
    </source>
</reference>
<sequence>MATHDSKQLEILQYIYDTVENRGFPPTVREICAAVGLSSTSTVHGHLTRLERKGYLIKDATKPRALEITHAGLDALGIKPKDIPVIGVVTAGQPILAVQDVEDYFPLPPNLASDAGELFMLRVHGTSMINAGILNGDYVIVRKQTTAQNGEIVVAMTDDGEATVKRFFKEDLHYRLQPENDAMDPIILNHVQILGKVVGLYRTNID</sequence>
<gene>
    <name evidence="1" type="primary">lexA</name>
    <name type="ordered locus">LBUL_1265</name>
</gene>
<proteinExistence type="inferred from homology"/>
<accession>Q049T1</accession>
<feature type="chain" id="PRO_0000322738" description="LexA repressor">
    <location>
        <begin position="1"/>
        <end position="206"/>
    </location>
</feature>
<feature type="DNA-binding region" description="H-T-H motif" evidence="1">
    <location>
        <begin position="28"/>
        <end position="48"/>
    </location>
</feature>
<feature type="active site" description="For autocatalytic cleavage activity" evidence="1">
    <location>
        <position position="127"/>
    </location>
</feature>
<feature type="active site" description="For autocatalytic cleavage activity" evidence="1">
    <location>
        <position position="165"/>
    </location>
</feature>
<feature type="site" description="Cleavage; by autolysis" evidence="1">
    <location>
        <begin position="91"/>
        <end position="92"/>
    </location>
</feature>
<evidence type="ECO:0000255" key="1">
    <source>
        <dbReference type="HAMAP-Rule" id="MF_00015"/>
    </source>
</evidence>
<name>LEXA_LACDB</name>
<comment type="function">
    <text evidence="1">Represses a number of genes involved in the response to DNA damage (SOS response), including recA and lexA. In the presence of single-stranded DNA, RecA interacts with LexA causing an autocatalytic cleavage which disrupts the DNA-binding part of LexA, leading to derepression of the SOS regulon and eventually DNA repair.</text>
</comment>
<comment type="catalytic activity">
    <reaction evidence="1">
        <text>Hydrolysis of Ala-|-Gly bond in repressor LexA.</text>
        <dbReference type="EC" id="3.4.21.88"/>
    </reaction>
</comment>
<comment type="subunit">
    <text evidence="1">Homodimer.</text>
</comment>
<comment type="similarity">
    <text evidence="1">Belongs to the peptidase S24 family.</text>
</comment>
<dbReference type="EC" id="3.4.21.88" evidence="1"/>
<dbReference type="EMBL" id="CP000412">
    <property type="protein sequence ID" value="ABJ58791.1"/>
    <property type="molecule type" value="Genomic_DNA"/>
</dbReference>
<dbReference type="RefSeq" id="WP_003618548.1">
    <property type="nucleotide sequence ID" value="NC_008529.1"/>
</dbReference>
<dbReference type="SMR" id="Q049T1"/>
<dbReference type="MEROPS" id="S24.001"/>
<dbReference type="KEGG" id="lbu:LBUL_1265"/>
<dbReference type="HOGENOM" id="CLU_066192_45_1_9"/>
<dbReference type="BioCyc" id="LDEL321956:LBUL_RS05945-MONOMER"/>
<dbReference type="GO" id="GO:0003677">
    <property type="term" value="F:DNA binding"/>
    <property type="evidence" value="ECO:0007669"/>
    <property type="project" value="UniProtKB-UniRule"/>
</dbReference>
<dbReference type="GO" id="GO:0004252">
    <property type="term" value="F:serine-type endopeptidase activity"/>
    <property type="evidence" value="ECO:0007669"/>
    <property type="project" value="UniProtKB-UniRule"/>
</dbReference>
<dbReference type="GO" id="GO:0006281">
    <property type="term" value="P:DNA repair"/>
    <property type="evidence" value="ECO:0007669"/>
    <property type="project" value="UniProtKB-UniRule"/>
</dbReference>
<dbReference type="GO" id="GO:0006260">
    <property type="term" value="P:DNA replication"/>
    <property type="evidence" value="ECO:0007669"/>
    <property type="project" value="UniProtKB-UniRule"/>
</dbReference>
<dbReference type="GO" id="GO:0045892">
    <property type="term" value="P:negative regulation of DNA-templated transcription"/>
    <property type="evidence" value="ECO:0007669"/>
    <property type="project" value="UniProtKB-UniRule"/>
</dbReference>
<dbReference type="GO" id="GO:0006508">
    <property type="term" value="P:proteolysis"/>
    <property type="evidence" value="ECO:0007669"/>
    <property type="project" value="InterPro"/>
</dbReference>
<dbReference type="GO" id="GO:0009432">
    <property type="term" value="P:SOS response"/>
    <property type="evidence" value="ECO:0007669"/>
    <property type="project" value="UniProtKB-UniRule"/>
</dbReference>
<dbReference type="CDD" id="cd00090">
    <property type="entry name" value="HTH_ARSR"/>
    <property type="match status" value="1"/>
</dbReference>
<dbReference type="CDD" id="cd06529">
    <property type="entry name" value="S24_LexA-like"/>
    <property type="match status" value="1"/>
</dbReference>
<dbReference type="FunFam" id="2.10.109.10:FF:000001">
    <property type="entry name" value="LexA repressor"/>
    <property type="match status" value="1"/>
</dbReference>
<dbReference type="Gene3D" id="2.10.109.10">
    <property type="entry name" value="Umud Fragment, subunit A"/>
    <property type="match status" value="1"/>
</dbReference>
<dbReference type="Gene3D" id="1.10.10.10">
    <property type="entry name" value="Winged helix-like DNA-binding domain superfamily/Winged helix DNA-binding domain"/>
    <property type="match status" value="1"/>
</dbReference>
<dbReference type="HAMAP" id="MF_00015">
    <property type="entry name" value="LexA"/>
    <property type="match status" value="1"/>
</dbReference>
<dbReference type="InterPro" id="IPR011991">
    <property type="entry name" value="ArsR-like_HTH"/>
</dbReference>
<dbReference type="InterPro" id="IPR006200">
    <property type="entry name" value="LexA"/>
</dbReference>
<dbReference type="InterPro" id="IPR039418">
    <property type="entry name" value="LexA-like"/>
</dbReference>
<dbReference type="InterPro" id="IPR036286">
    <property type="entry name" value="LexA/Signal_pep-like_sf"/>
</dbReference>
<dbReference type="InterPro" id="IPR006199">
    <property type="entry name" value="LexA_DNA-bd_dom"/>
</dbReference>
<dbReference type="InterPro" id="IPR050077">
    <property type="entry name" value="LexA_repressor"/>
</dbReference>
<dbReference type="InterPro" id="IPR006197">
    <property type="entry name" value="Peptidase_S24_LexA"/>
</dbReference>
<dbReference type="InterPro" id="IPR015927">
    <property type="entry name" value="Peptidase_S24_S26A/B/C"/>
</dbReference>
<dbReference type="InterPro" id="IPR036388">
    <property type="entry name" value="WH-like_DNA-bd_sf"/>
</dbReference>
<dbReference type="InterPro" id="IPR036390">
    <property type="entry name" value="WH_DNA-bd_sf"/>
</dbReference>
<dbReference type="NCBIfam" id="TIGR00498">
    <property type="entry name" value="lexA"/>
    <property type="match status" value="1"/>
</dbReference>
<dbReference type="PANTHER" id="PTHR33516">
    <property type="entry name" value="LEXA REPRESSOR"/>
    <property type="match status" value="1"/>
</dbReference>
<dbReference type="PANTHER" id="PTHR33516:SF2">
    <property type="entry name" value="LEXA REPRESSOR-RELATED"/>
    <property type="match status" value="1"/>
</dbReference>
<dbReference type="Pfam" id="PF01726">
    <property type="entry name" value="LexA_DNA_bind"/>
    <property type="match status" value="1"/>
</dbReference>
<dbReference type="Pfam" id="PF00717">
    <property type="entry name" value="Peptidase_S24"/>
    <property type="match status" value="1"/>
</dbReference>
<dbReference type="PRINTS" id="PR00726">
    <property type="entry name" value="LEXASERPTASE"/>
</dbReference>
<dbReference type="SUPFAM" id="SSF51306">
    <property type="entry name" value="LexA/Signal peptidase"/>
    <property type="match status" value="1"/>
</dbReference>
<dbReference type="SUPFAM" id="SSF46785">
    <property type="entry name" value="Winged helix' DNA-binding domain"/>
    <property type="match status" value="1"/>
</dbReference>
<keyword id="KW-0068">Autocatalytic cleavage</keyword>
<keyword id="KW-0227">DNA damage</keyword>
<keyword id="KW-0234">DNA repair</keyword>
<keyword id="KW-0235">DNA replication</keyword>
<keyword id="KW-0238">DNA-binding</keyword>
<keyword id="KW-0378">Hydrolase</keyword>
<keyword id="KW-0678">Repressor</keyword>
<keyword id="KW-0742">SOS response</keyword>
<keyword id="KW-0804">Transcription</keyword>
<keyword id="KW-0805">Transcription regulation</keyword>